<gene>
    <name type="primary">HAPLN2</name>
    <name type="synonym">BRAL1</name>
</gene>
<dbReference type="EMBL" id="AB049061">
    <property type="protein sequence ID" value="BAB17669.1"/>
    <property type="molecule type" value="Genomic_DNA"/>
</dbReference>
<dbReference type="EMBL" id="AB049054">
    <property type="protein sequence ID" value="BAB17662.1"/>
    <property type="molecule type" value="mRNA"/>
</dbReference>
<dbReference type="EMBL" id="AK090712">
    <property type="protein sequence ID" value="BAG52217.1"/>
    <property type="molecule type" value="mRNA"/>
</dbReference>
<dbReference type="EMBL" id="CH471121">
    <property type="protein sequence ID" value="EAW52933.1"/>
    <property type="molecule type" value="Genomic_DNA"/>
</dbReference>
<dbReference type="EMBL" id="CH471121">
    <property type="protein sequence ID" value="EAW52934.1"/>
    <property type="molecule type" value="Genomic_DNA"/>
</dbReference>
<dbReference type="EMBL" id="BC029864">
    <property type="protein sequence ID" value="AAH29864.1"/>
    <property type="molecule type" value="mRNA"/>
</dbReference>
<dbReference type="CCDS" id="CCDS1148.1"/>
<dbReference type="PIR" id="JC7505">
    <property type="entry name" value="JC7505"/>
</dbReference>
<dbReference type="RefSeq" id="NP_068589.1">
    <property type="nucleotide sequence ID" value="NM_021817.3"/>
</dbReference>
<dbReference type="RefSeq" id="XP_005245472.1">
    <property type="nucleotide sequence ID" value="XM_005245415.2"/>
</dbReference>
<dbReference type="RefSeq" id="XP_011508155.1">
    <property type="nucleotide sequence ID" value="XM_011509853.3"/>
</dbReference>
<dbReference type="RefSeq" id="XP_016857509.1">
    <property type="nucleotide sequence ID" value="XM_017002020.2"/>
</dbReference>
<dbReference type="RefSeq" id="XP_054188829.1">
    <property type="nucleotide sequence ID" value="XM_054332854.1"/>
</dbReference>
<dbReference type="RefSeq" id="XP_054188830.1">
    <property type="nucleotide sequence ID" value="XM_054332855.1"/>
</dbReference>
<dbReference type="RefSeq" id="XP_054194048.1">
    <property type="nucleotide sequence ID" value="XM_054338073.1"/>
</dbReference>
<dbReference type="RefSeq" id="XP_054194049.1">
    <property type="nucleotide sequence ID" value="XM_054338074.1"/>
</dbReference>
<dbReference type="SMR" id="Q9GZV7"/>
<dbReference type="BioGRID" id="121916">
    <property type="interactions" value="47"/>
</dbReference>
<dbReference type="FunCoup" id="Q9GZV7">
    <property type="interactions" value="56"/>
</dbReference>
<dbReference type="IntAct" id="Q9GZV7">
    <property type="interactions" value="43"/>
</dbReference>
<dbReference type="STRING" id="9606.ENSP00000255039"/>
<dbReference type="SwissPalm" id="Q9GZV7"/>
<dbReference type="BioMuta" id="HAPLN2"/>
<dbReference type="DMDM" id="20177844"/>
<dbReference type="MassIVE" id="Q9GZV7"/>
<dbReference type="PaxDb" id="9606-ENSP00000255039"/>
<dbReference type="PeptideAtlas" id="Q9GZV7"/>
<dbReference type="ProteomicsDB" id="80158"/>
<dbReference type="Antibodypedia" id="34222">
    <property type="antibodies" value="85 antibodies from 24 providers"/>
</dbReference>
<dbReference type="DNASU" id="60484"/>
<dbReference type="Ensembl" id="ENST00000255039.6">
    <property type="protein sequence ID" value="ENSP00000255039.1"/>
    <property type="gene ID" value="ENSG00000132702.13"/>
</dbReference>
<dbReference type="Ensembl" id="ENST00000708583.1">
    <property type="protein sequence ID" value="ENSP00000517288.1"/>
    <property type="gene ID" value="ENSG00000291756.1"/>
</dbReference>
<dbReference type="GeneID" id="60484"/>
<dbReference type="KEGG" id="hsa:60484"/>
<dbReference type="MANE-Select" id="ENST00000255039.6">
    <property type="protein sequence ID" value="ENSP00000255039.1"/>
    <property type="RefSeq nucleotide sequence ID" value="NM_021817.3"/>
    <property type="RefSeq protein sequence ID" value="NP_068589.1"/>
</dbReference>
<dbReference type="UCSC" id="uc001fpn.1">
    <property type="organism name" value="human"/>
</dbReference>
<dbReference type="AGR" id="HGNC:17410"/>
<dbReference type="CTD" id="60484"/>
<dbReference type="DisGeNET" id="60484"/>
<dbReference type="GeneCards" id="HAPLN2"/>
<dbReference type="HGNC" id="HGNC:17410">
    <property type="gene designation" value="HAPLN2"/>
</dbReference>
<dbReference type="HPA" id="ENSG00000132702">
    <property type="expression patterns" value="Tissue enriched (brain)"/>
</dbReference>
<dbReference type="MIM" id="619726">
    <property type="type" value="gene"/>
</dbReference>
<dbReference type="neXtProt" id="NX_Q9GZV7"/>
<dbReference type="OpenTargets" id="ENSG00000132702"/>
<dbReference type="PharmGKB" id="PA134878581"/>
<dbReference type="VEuPathDB" id="HostDB:ENSG00000132702"/>
<dbReference type="eggNOG" id="ENOG502QV1D">
    <property type="taxonomic scope" value="Eukaryota"/>
</dbReference>
<dbReference type="GeneTree" id="ENSGT00940000161384"/>
<dbReference type="HOGENOM" id="CLU_052285_1_0_1"/>
<dbReference type="InParanoid" id="Q9GZV7"/>
<dbReference type="OMA" id="CDGGWLE"/>
<dbReference type="OrthoDB" id="5359219at2759"/>
<dbReference type="PAN-GO" id="Q9GZV7">
    <property type="GO annotations" value="3 GO annotations based on evolutionary models"/>
</dbReference>
<dbReference type="PhylomeDB" id="Q9GZV7"/>
<dbReference type="TreeFam" id="TF332134"/>
<dbReference type="PathwayCommons" id="Q9GZV7"/>
<dbReference type="SignaLink" id="Q9GZV7"/>
<dbReference type="BioGRID-ORCS" id="60484">
    <property type="hits" value="163 hits in 1142 CRISPR screens"/>
</dbReference>
<dbReference type="CD-CODE" id="FB4E32DD">
    <property type="entry name" value="Presynaptic clusters and postsynaptic densities"/>
</dbReference>
<dbReference type="ChiTaRS" id="HAPLN2">
    <property type="organism name" value="human"/>
</dbReference>
<dbReference type="GeneWiki" id="HAPLN2"/>
<dbReference type="GenomeRNAi" id="60484"/>
<dbReference type="Pharos" id="Q9GZV7">
    <property type="development level" value="Tbio"/>
</dbReference>
<dbReference type="PRO" id="PR:Q9GZV7"/>
<dbReference type="Proteomes" id="UP000005640">
    <property type="component" value="Chromosome 1"/>
</dbReference>
<dbReference type="RNAct" id="Q9GZV7">
    <property type="molecule type" value="protein"/>
</dbReference>
<dbReference type="Bgee" id="ENSG00000132702">
    <property type="expression patterns" value="Expressed in C1 segment of cervical spinal cord and 113 other cell types or tissues"/>
</dbReference>
<dbReference type="ExpressionAtlas" id="Q9GZV7">
    <property type="expression patterns" value="baseline and differential"/>
</dbReference>
<dbReference type="GO" id="GO:0031012">
    <property type="term" value="C:extracellular matrix"/>
    <property type="evidence" value="ECO:0000250"/>
    <property type="project" value="UniProtKB"/>
</dbReference>
<dbReference type="GO" id="GO:0005615">
    <property type="term" value="C:extracellular space"/>
    <property type="evidence" value="ECO:0000318"/>
    <property type="project" value="GO_Central"/>
</dbReference>
<dbReference type="GO" id="GO:0033268">
    <property type="term" value="C:node of Ranvier"/>
    <property type="evidence" value="ECO:0007669"/>
    <property type="project" value="Ensembl"/>
</dbReference>
<dbReference type="GO" id="GO:0072534">
    <property type="term" value="C:perineuronal net"/>
    <property type="evidence" value="ECO:0000318"/>
    <property type="project" value="GO_Central"/>
</dbReference>
<dbReference type="GO" id="GO:0045202">
    <property type="term" value="C:synapse"/>
    <property type="evidence" value="ECO:0000318"/>
    <property type="project" value="GO_Central"/>
</dbReference>
<dbReference type="GO" id="GO:0005540">
    <property type="term" value="F:hyaluronic acid binding"/>
    <property type="evidence" value="ECO:0007669"/>
    <property type="project" value="UniProtKB-KW"/>
</dbReference>
<dbReference type="GO" id="GO:0007155">
    <property type="term" value="P:cell adhesion"/>
    <property type="evidence" value="ECO:0007669"/>
    <property type="project" value="InterPro"/>
</dbReference>
<dbReference type="GO" id="GO:0007417">
    <property type="term" value="P:central nervous system development"/>
    <property type="evidence" value="ECO:0000318"/>
    <property type="project" value="GO_Central"/>
</dbReference>
<dbReference type="GO" id="GO:0008065">
    <property type="term" value="P:establishment of blood-nerve barrier"/>
    <property type="evidence" value="ECO:0007669"/>
    <property type="project" value="Ensembl"/>
</dbReference>
<dbReference type="GO" id="GO:0085029">
    <property type="term" value="P:extracellular matrix assembly"/>
    <property type="evidence" value="ECO:0007669"/>
    <property type="project" value="Ensembl"/>
</dbReference>
<dbReference type="GO" id="GO:0001501">
    <property type="term" value="P:skeletal system development"/>
    <property type="evidence" value="ECO:0000318"/>
    <property type="project" value="GO_Central"/>
</dbReference>
<dbReference type="CDD" id="cd03518">
    <property type="entry name" value="Link_domain_HAPLN_module_1"/>
    <property type="match status" value="1"/>
</dbReference>
<dbReference type="CDD" id="cd03519">
    <property type="entry name" value="Link_domain_HAPLN_module_2"/>
    <property type="match status" value="1"/>
</dbReference>
<dbReference type="FunFam" id="2.60.40.10:FF:000846">
    <property type="entry name" value="Hyaluronan and proteoglycan link protein 2"/>
    <property type="match status" value="1"/>
</dbReference>
<dbReference type="FunFam" id="3.10.100.10:FF:000001">
    <property type="entry name" value="Hyaluronan proteoglycan link protein 1"/>
    <property type="match status" value="1"/>
</dbReference>
<dbReference type="FunFam" id="3.10.100.10:FF:000002">
    <property type="entry name" value="Hyaluronan proteoglycan link protein 1"/>
    <property type="match status" value="1"/>
</dbReference>
<dbReference type="Gene3D" id="2.60.40.10">
    <property type="entry name" value="Immunoglobulins"/>
    <property type="match status" value="1"/>
</dbReference>
<dbReference type="Gene3D" id="3.10.100.10">
    <property type="entry name" value="Mannose-Binding Protein A, subunit A"/>
    <property type="match status" value="2"/>
</dbReference>
<dbReference type="InterPro" id="IPR016186">
    <property type="entry name" value="C-type_lectin-like/link_sf"/>
</dbReference>
<dbReference type="InterPro" id="IPR016187">
    <property type="entry name" value="CTDL_fold"/>
</dbReference>
<dbReference type="InterPro" id="IPR050691">
    <property type="entry name" value="Hyaluronan_bind_Proteoglycan"/>
</dbReference>
<dbReference type="InterPro" id="IPR007110">
    <property type="entry name" value="Ig-like_dom"/>
</dbReference>
<dbReference type="InterPro" id="IPR036179">
    <property type="entry name" value="Ig-like_dom_sf"/>
</dbReference>
<dbReference type="InterPro" id="IPR013783">
    <property type="entry name" value="Ig-like_fold"/>
</dbReference>
<dbReference type="InterPro" id="IPR003599">
    <property type="entry name" value="Ig_sub"/>
</dbReference>
<dbReference type="InterPro" id="IPR013106">
    <property type="entry name" value="Ig_V-set"/>
</dbReference>
<dbReference type="InterPro" id="IPR000538">
    <property type="entry name" value="Link_dom"/>
</dbReference>
<dbReference type="PANTHER" id="PTHR22804">
    <property type="entry name" value="AGGRECAN/VERSICAN PROTEOGLYCAN"/>
    <property type="match status" value="1"/>
</dbReference>
<dbReference type="PANTHER" id="PTHR22804:SF8">
    <property type="entry name" value="HYALURONAN AND PROTEOGLYCAN LINK PROTEIN 2"/>
    <property type="match status" value="1"/>
</dbReference>
<dbReference type="Pfam" id="PF07686">
    <property type="entry name" value="V-set"/>
    <property type="match status" value="1"/>
</dbReference>
<dbReference type="Pfam" id="PF00193">
    <property type="entry name" value="Xlink"/>
    <property type="match status" value="2"/>
</dbReference>
<dbReference type="PRINTS" id="PR01265">
    <property type="entry name" value="LINKMODULE"/>
</dbReference>
<dbReference type="SMART" id="SM00409">
    <property type="entry name" value="IG"/>
    <property type="match status" value="1"/>
</dbReference>
<dbReference type="SMART" id="SM00406">
    <property type="entry name" value="IGv"/>
    <property type="match status" value="1"/>
</dbReference>
<dbReference type="SMART" id="SM00445">
    <property type="entry name" value="LINK"/>
    <property type="match status" value="2"/>
</dbReference>
<dbReference type="SUPFAM" id="SSF56436">
    <property type="entry name" value="C-type lectin-like"/>
    <property type="match status" value="2"/>
</dbReference>
<dbReference type="SUPFAM" id="SSF48726">
    <property type="entry name" value="Immunoglobulin"/>
    <property type="match status" value="1"/>
</dbReference>
<dbReference type="PROSITE" id="PS50835">
    <property type="entry name" value="IG_LIKE"/>
    <property type="match status" value="1"/>
</dbReference>
<dbReference type="PROSITE" id="PS01241">
    <property type="entry name" value="LINK_1"/>
    <property type="match status" value="2"/>
</dbReference>
<dbReference type="PROSITE" id="PS50963">
    <property type="entry name" value="LINK_2"/>
    <property type="match status" value="2"/>
</dbReference>
<comment type="function">
    <text evidence="2">Mediates a firm binding of versican V2 to hyaluronic acid. May play a pivotal role in the formation of the hyaluronan-associated matrix in the central nervous system (CNS) which facilitates neuronal conduction and general structural stabilization. Binds to hyaluronic acid (By similarity).</text>
</comment>
<comment type="interaction">
    <interactant intactId="EBI-11956675">
        <id>Q9GZV7</id>
    </interactant>
    <interactant intactId="EBI-12015080">
        <id>Q8WXK3-2</id>
        <label>ASB13</label>
    </interactant>
    <organismsDiffer>false</organismsDiffer>
    <experiments>3</experiments>
</comment>
<comment type="interaction">
    <interactant intactId="EBI-11956675">
        <id>Q9GZV7</id>
    </interactant>
    <interactant intactId="EBI-11524452">
        <id>Q8N9N5-2</id>
        <label>BANP</label>
    </interactant>
    <organismsDiffer>false</organismsDiffer>
    <experiments>3</experiments>
</comment>
<comment type="interaction">
    <interactant intactId="EBI-11956675">
        <id>Q9GZV7</id>
    </interactant>
    <interactant intactId="EBI-11977221">
        <id>Q86Z20</id>
        <label>CCDC125</label>
    </interactant>
    <organismsDiffer>false</organismsDiffer>
    <experiments>3</experiments>
</comment>
<comment type="interaction">
    <interactant intactId="EBI-11956675">
        <id>Q9GZV7</id>
    </interactant>
    <interactant intactId="EBI-7062247">
        <id>Q9UHD4</id>
        <label>CIDEB</label>
    </interactant>
    <organismsDiffer>false</organismsDiffer>
    <experiments>3</experiments>
</comment>
<comment type="interaction">
    <interactant intactId="EBI-11956675">
        <id>Q9GZV7</id>
    </interactant>
    <interactant intactId="EBI-371922">
        <id>Q96B26</id>
        <label>EXOSC8</label>
    </interactant>
    <organismsDiffer>false</organismsDiffer>
    <experiments>3</experiments>
</comment>
<comment type="interaction">
    <interactant intactId="EBI-11956675">
        <id>Q9GZV7</id>
    </interactant>
    <interactant intactId="EBI-741101">
        <id>Q13643</id>
        <label>FHL3</label>
    </interactant>
    <organismsDiffer>false</organismsDiffer>
    <experiments>3</experiments>
</comment>
<comment type="interaction">
    <interactant intactId="EBI-11956675">
        <id>Q9GZV7</id>
    </interactant>
    <interactant intactId="EBI-750641">
        <id>Q5TD97</id>
        <label>FHL5</label>
    </interactant>
    <organismsDiffer>false</organismsDiffer>
    <experiments>3</experiments>
</comment>
<comment type="interaction">
    <interactant intactId="EBI-11956675">
        <id>Q9GZV7</id>
    </interactant>
    <interactant intactId="EBI-10242151">
        <id>Q53EP0-3</id>
        <label>FNDC3B</label>
    </interactant>
    <organismsDiffer>false</organismsDiffer>
    <experiments>3</experiments>
</comment>
<comment type="interaction">
    <interactant intactId="EBI-11956675">
        <id>Q9GZV7</id>
    </interactant>
    <interactant intactId="EBI-5916454">
        <id>A6NEM1</id>
        <label>GOLGA6L9</label>
    </interactant>
    <organismsDiffer>false</organismsDiffer>
    <experiments>3</experiments>
</comment>
<comment type="interaction">
    <interactant intactId="EBI-11956675">
        <id>Q9GZV7</id>
    </interactant>
    <interactant intactId="EBI-739566">
        <id>P19012</id>
        <label>KRT15</label>
    </interactant>
    <organismsDiffer>false</organismsDiffer>
    <experiments>3</experiments>
</comment>
<comment type="interaction">
    <interactant intactId="EBI-11956675">
        <id>Q9GZV7</id>
    </interactant>
    <interactant intactId="EBI-3044087">
        <id>Q7Z3Y8</id>
        <label>KRT27</label>
    </interactant>
    <organismsDiffer>false</organismsDiffer>
    <experiments>3</experiments>
</comment>
<comment type="interaction">
    <interactant intactId="EBI-11956675">
        <id>Q9GZV7</id>
    </interactant>
    <interactant intactId="EBI-948001">
        <id>Q15323</id>
        <label>KRT31</label>
    </interactant>
    <organismsDiffer>false</organismsDiffer>
    <experiments>3</experiments>
</comment>
<comment type="interaction">
    <interactant intactId="EBI-11956675">
        <id>Q9GZV7</id>
    </interactant>
    <interactant intactId="EBI-1049638">
        <id>Q14525</id>
        <label>KRT33B</label>
    </interactant>
    <organismsDiffer>false</organismsDiffer>
    <experiments>3</experiments>
</comment>
<comment type="interaction">
    <interactant intactId="EBI-11956675">
        <id>Q9GZV7</id>
    </interactant>
    <interactant intactId="EBI-1047093">
        <id>O76011</id>
        <label>KRT34</label>
    </interactant>
    <organismsDiffer>false</organismsDiffer>
    <experiments>5</experiments>
</comment>
<comment type="interaction">
    <interactant intactId="EBI-11956675">
        <id>Q9GZV7</id>
    </interactant>
    <interactant intactId="EBI-1058674">
        <id>Q92764</id>
        <label>KRT35</label>
    </interactant>
    <organismsDiffer>false</organismsDiffer>
    <experiments>3</experiments>
</comment>
<comment type="interaction">
    <interactant intactId="EBI-11956675">
        <id>Q9GZV7</id>
    </interactant>
    <interactant intactId="EBI-1045716">
        <id>O76014</id>
        <label>KRT37</label>
    </interactant>
    <organismsDiffer>false</organismsDiffer>
    <experiments>3</experiments>
</comment>
<comment type="interaction">
    <interactant intactId="EBI-11956675">
        <id>Q9GZV7</id>
    </interactant>
    <interactant intactId="EBI-10171697">
        <id>Q6A162</id>
        <label>KRT40</label>
    </interactant>
    <organismsDiffer>false</organismsDiffer>
    <experiments>3</experiments>
</comment>
<comment type="interaction">
    <interactant intactId="EBI-11956675">
        <id>Q9GZV7</id>
    </interactant>
    <interactant intactId="EBI-1049371">
        <id>P78386</id>
        <label>KRT85</label>
    </interactant>
    <organismsDiffer>false</organismsDiffer>
    <experiments>3</experiments>
</comment>
<comment type="interaction">
    <interactant intactId="EBI-11956675">
        <id>Q9GZV7</id>
    </interactant>
    <interactant intactId="EBI-10171774">
        <id>P60410</id>
        <label>KRTAP10-8</label>
    </interactant>
    <organismsDiffer>false</organismsDiffer>
    <experiments>3</experiments>
</comment>
<comment type="interaction">
    <interactant intactId="EBI-11956675">
        <id>Q9GZV7</id>
    </interactant>
    <interactant intactId="EBI-1048945">
        <id>Q3LI72</id>
        <label>KRTAP19-5</label>
    </interactant>
    <organismsDiffer>false</organismsDiffer>
    <experiments>3</experiments>
</comment>
<comment type="interaction">
    <interactant intactId="EBI-11956675">
        <id>Q9GZV7</id>
    </interactant>
    <interactant intactId="EBI-14065470">
        <id>Q9BYR9</id>
        <label>KRTAP2-4</label>
    </interactant>
    <organismsDiffer>false</organismsDiffer>
    <experiments>3</experiments>
</comment>
<comment type="interaction">
    <interactant intactId="EBI-11956675">
        <id>Q9GZV7</id>
    </interactant>
    <interactant intactId="EBI-11962084">
        <id>Q3LI66</id>
        <label>KRTAP6-2</label>
    </interactant>
    <organismsDiffer>false</organismsDiffer>
    <experiments>3</experiments>
</comment>
<comment type="interaction">
    <interactant intactId="EBI-11956675">
        <id>Q9GZV7</id>
    </interactant>
    <interactant intactId="EBI-22311199">
        <id>Q3LI67</id>
        <label>KRTAP6-3</label>
    </interactant>
    <organismsDiffer>false</organismsDiffer>
    <experiments>3</experiments>
</comment>
<comment type="interaction">
    <interactant intactId="EBI-11956675">
        <id>Q9GZV7</id>
    </interactant>
    <interactant intactId="EBI-1044640">
        <id>Q9BYQ4</id>
        <label>KRTAP9-2</label>
    </interactant>
    <organismsDiffer>false</organismsDiffer>
    <experiments>3</experiments>
</comment>
<comment type="interaction">
    <interactant intactId="EBI-11956675">
        <id>Q9GZV7</id>
    </interactant>
    <interactant intactId="EBI-724076">
        <id>Q99750</id>
        <label>MDFI</label>
    </interactant>
    <organismsDiffer>false</organismsDiffer>
    <experiments>3</experiments>
</comment>
<comment type="interaction">
    <interactant intactId="EBI-11956675">
        <id>Q9GZV7</id>
    </interactant>
    <interactant intactId="EBI-10172526">
        <id>Q9UJV3-2</id>
        <label>MID2</label>
    </interactant>
    <organismsDiffer>false</organismsDiffer>
    <experiments>3</experiments>
</comment>
<comment type="interaction">
    <interactant intactId="EBI-11956675">
        <id>Q9GZV7</id>
    </interactant>
    <interactant intactId="EBI-11522433">
        <id>Q5JR59-3</id>
        <label>MTUS2</label>
    </interactant>
    <organismsDiffer>false</organismsDiffer>
    <experiments>3</experiments>
</comment>
<comment type="interaction">
    <interactant intactId="EBI-11956675">
        <id>Q9GZV7</id>
    </interactant>
    <interactant intactId="EBI-22310682">
        <id>P0DPK4</id>
        <label>NOTCH2NLC</label>
    </interactant>
    <organismsDiffer>false</organismsDiffer>
    <experiments>3</experiments>
</comment>
<comment type="interaction">
    <interactant intactId="EBI-11956675">
        <id>Q9GZV7</id>
    </interactant>
    <interactant intactId="EBI-536879">
        <id>O43482</id>
        <label>OIP5</label>
    </interactant>
    <organismsDiffer>false</organismsDiffer>
    <experiments>3</experiments>
</comment>
<comment type="interaction">
    <interactant intactId="EBI-11956675">
        <id>Q9GZV7</id>
    </interactant>
    <interactant intactId="EBI-357275">
        <id>Q99471</id>
        <label>PFDN5</label>
    </interactant>
    <organismsDiffer>false</organismsDiffer>
    <experiments>3</experiments>
</comment>
<comment type="interaction">
    <interactant intactId="EBI-11956675">
        <id>Q9GZV7</id>
    </interactant>
    <interactant intactId="EBI-11339910">
        <id>Q8IYS1</id>
        <label>PM20D2</label>
    </interactant>
    <organismsDiffer>false</organismsDiffer>
    <experiments>3</experiments>
</comment>
<comment type="interaction">
    <interactant intactId="EBI-11956675">
        <id>Q9GZV7</id>
    </interactant>
    <interactant intactId="EBI-302345">
        <id>Q8ND90</id>
        <label>PNMA1</label>
    </interactant>
    <organismsDiffer>false</organismsDiffer>
    <experiments>3</experiments>
</comment>
<comment type="interaction">
    <interactant intactId="EBI-11956675">
        <id>Q9GZV7</id>
    </interactant>
    <interactant intactId="EBI-302355">
        <id>Q9UL42</id>
        <label>PNMA2</label>
    </interactant>
    <organismsDiffer>false</organismsDiffer>
    <experiments>3</experiments>
</comment>
<comment type="interaction">
    <interactant intactId="EBI-11956675">
        <id>Q9GZV7</id>
    </interactant>
    <interactant intactId="EBI-10293968">
        <id>Q96T49</id>
        <label>PPP1R16B</label>
    </interactant>
    <organismsDiffer>false</organismsDiffer>
    <experiments>3</experiments>
</comment>
<comment type="interaction">
    <interactant intactId="EBI-11956675">
        <id>Q9GZV7</id>
    </interactant>
    <interactant intactId="EBI-1050964">
        <id>O43586</id>
        <label>PSTPIP1</label>
    </interactant>
    <organismsDiffer>false</organismsDiffer>
    <experiments>3</experiments>
</comment>
<comment type="interaction">
    <interactant intactId="EBI-11956675">
        <id>Q9GZV7</id>
    </interactant>
    <interactant intactId="EBI-12235008">
        <id>P55735-3</id>
        <label>SEC13</label>
    </interactant>
    <organismsDiffer>false</organismsDiffer>
    <experiments>3</experiments>
</comment>
<comment type="interaction">
    <interactant intactId="EBI-11956675">
        <id>Q9GZV7</id>
    </interactant>
    <interactant intactId="EBI-717422">
        <id>Q12800</id>
        <label>TFCP2</label>
    </interactant>
    <organismsDiffer>false</organismsDiffer>
    <experiments>3</experiments>
</comment>
<comment type="interaction">
    <interactant intactId="EBI-11956675">
        <id>Q9GZV7</id>
    </interactant>
    <interactant intactId="EBI-740098">
        <id>P36406</id>
        <label>TRIM23</label>
    </interactant>
    <organismsDiffer>false</organismsDiffer>
    <experiments>3</experiments>
</comment>
<comment type="interaction">
    <interactant intactId="EBI-11956675">
        <id>Q9GZV7</id>
    </interactant>
    <interactant intactId="EBI-719493">
        <id>P14373</id>
        <label>TRIM27</label>
    </interactant>
    <organismsDiffer>false</organismsDiffer>
    <experiments>3</experiments>
</comment>
<comment type="interaction">
    <interactant intactId="EBI-11956675">
        <id>Q9GZV7</id>
    </interactant>
    <interactant intactId="EBI-11957238">
        <id>Q2TAL6</id>
        <label>VWC2</label>
    </interactant>
    <organismsDiffer>false</organismsDiffer>
    <experiments>3</experiments>
</comment>
<comment type="interaction">
    <interactant intactId="EBI-11956675">
        <id>Q9GZV7</id>
    </interactant>
    <interactant intactId="EBI-12030590">
        <id>Q9H0C1</id>
        <label>ZMYND12</label>
    </interactant>
    <organismsDiffer>false</organismsDiffer>
    <experiments>3</experiments>
</comment>
<comment type="interaction">
    <interactant intactId="EBI-11956675">
        <id>Q9GZV7</id>
    </interactant>
    <interactant intactId="EBI-11962468">
        <id>Q7Z4V0</id>
        <label>ZNF438</label>
    </interactant>
    <organismsDiffer>false</organismsDiffer>
    <experiments>3</experiments>
</comment>
<comment type="interaction">
    <interactant intactId="EBI-11956675">
        <id>Q9GZV7</id>
    </interactant>
    <interactant intactId="EBI-625509">
        <id>Q8N720</id>
        <label>ZNF655</label>
    </interactant>
    <organismsDiffer>false</organismsDiffer>
    <experiments>3</experiments>
</comment>
<comment type="subcellular location">
    <subcellularLocation>
        <location evidence="2">Secreted</location>
        <location evidence="2">Extracellular space</location>
        <location evidence="2">Extracellular matrix</location>
    </subcellularLocation>
</comment>
<comment type="tissue specificity">
    <text evidence="5">Expressed only in adult brain.</text>
</comment>
<comment type="similarity">
    <text evidence="6">Belongs to the HAPLN family.</text>
</comment>
<feature type="signal peptide" evidence="3">
    <location>
        <begin position="1"/>
        <end position="26"/>
    </location>
</feature>
<feature type="chain" id="PRO_0000013187" description="Hyaluronan and proteoglycan link protein 2">
    <location>
        <begin position="27"/>
        <end position="340"/>
    </location>
</feature>
<feature type="domain" description="Ig-like V-type">
    <location>
        <begin position="34"/>
        <end position="144"/>
    </location>
</feature>
<feature type="domain" description="Link 1" evidence="4">
    <location>
        <begin position="148"/>
        <end position="242"/>
    </location>
</feature>
<feature type="domain" description="Link 2" evidence="4">
    <location>
        <begin position="245"/>
        <end position="338"/>
    </location>
</feature>
<feature type="disulfide bond" evidence="1">
    <location>
        <begin position="57"/>
        <end position="128"/>
    </location>
</feature>
<feature type="disulfide bond" evidence="1">
    <location>
        <begin position="170"/>
        <end position="240"/>
    </location>
</feature>
<feature type="disulfide bond" evidence="1">
    <location>
        <begin position="194"/>
        <end position="215"/>
    </location>
</feature>
<feature type="disulfide bond" evidence="1">
    <location>
        <begin position="265"/>
        <end position="336"/>
    </location>
</feature>
<feature type="disulfide bond" evidence="1">
    <location>
        <begin position="290"/>
        <end position="311"/>
    </location>
</feature>
<evidence type="ECO:0000250" key="1"/>
<evidence type="ECO:0000250" key="2">
    <source>
        <dbReference type="UniProtKB" id="Q9ESM3"/>
    </source>
</evidence>
<evidence type="ECO:0000255" key="3"/>
<evidence type="ECO:0000255" key="4">
    <source>
        <dbReference type="PROSITE-ProRule" id="PRU00323"/>
    </source>
</evidence>
<evidence type="ECO:0000269" key="5">
    <source>
    </source>
</evidence>
<evidence type="ECO:0000305" key="6"/>
<proteinExistence type="evidence at protein level"/>
<sequence length="340" mass="37775">MPGWLTLPTLCRFLLWAFTIFHKAQGDPASHPGPHYLLPPIHEVIHSHRGATATLPCVLGTTPPSYKVRWSKVEPGELRETLILITNGLHARGYGPLGGRARMRRGHRLDASLVIAGVRLEDEGRYRCELINGIEDESVALTLSLEGVVFPYQPSRGRYQFNYYEAKQACEEQDGRLATYSQLYQAWTEGLDWCNAGWLLEGSVRYPVLTARAPCGGRGRPGIRSYGPRDRMRDRYDAFCFTSALAGQVFFVPGRLTLSEAHAACRRRGAVVAKVGHLYAAWKFSGLDQCDGGWLADGSVRFPITTPRPRCGGLPDPGVRSFGFPRPQQAAYGTYCYAEN</sequence>
<keyword id="KW-1015">Disulfide bond</keyword>
<keyword id="KW-0272">Extracellular matrix</keyword>
<keyword id="KW-0373">Hyaluronic acid</keyword>
<keyword id="KW-0393">Immunoglobulin domain</keyword>
<keyword id="KW-1267">Proteomics identification</keyword>
<keyword id="KW-1185">Reference proteome</keyword>
<keyword id="KW-0677">Repeat</keyword>
<keyword id="KW-0964">Secreted</keyword>
<keyword id="KW-0732">Signal</keyword>
<reference key="1">
    <citation type="journal article" date="2000" name="Biochem. Biophys. Res. Commun.">
        <title>The brain link protein-1 (BRAL1): cDNA cloning, genomic structure, and characterization as a novel link protein expressed in adult brain.</title>
        <authorList>
            <person name="Hirakawa S."/>
            <person name="Oohashi T."/>
            <person name="Su W.-D."/>
            <person name="Yoshioka H."/>
            <person name="Murakami T."/>
            <person name="Arata J."/>
            <person name="Ninomiya Y."/>
        </authorList>
    </citation>
    <scope>NUCLEOTIDE SEQUENCE [MRNA]</scope>
    <scope>TISSUE SPECIFICITY</scope>
</reference>
<reference key="2">
    <citation type="journal article" date="2004" name="Nat. Genet.">
        <title>Complete sequencing and characterization of 21,243 full-length human cDNAs.</title>
        <authorList>
            <person name="Ota T."/>
            <person name="Suzuki Y."/>
            <person name="Nishikawa T."/>
            <person name="Otsuki T."/>
            <person name="Sugiyama T."/>
            <person name="Irie R."/>
            <person name="Wakamatsu A."/>
            <person name="Hayashi K."/>
            <person name="Sato H."/>
            <person name="Nagai K."/>
            <person name="Kimura K."/>
            <person name="Makita H."/>
            <person name="Sekine M."/>
            <person name="Obayashi M."/>
            <person name="Nishi T."/>
            <person name="Shibahara T."/>
            <person name="Tanaka T."/>
            <person name="Ishii S."/>
            <person name="Yamamoto J."/>
            <person name="Saito K."/>
            <person name="Kawai Y."/>
            <person name="Isono Y."/>
            <person name="Nakamura Y."/>
            <person name="Nagahari K."/>
            <person name="Murakami K."/>
            <person name="Yasuda T."/>
            <person name="Iwayanagi T."/>
            <person name="Wagatsuma M."/>
            <person name="Shiratori A."/>
            <person name="Sudo H."/>
            <person name="Hosoiri T."/>
            <person name="Kaku Y."/>
            <person name="Kodaira H."/>
            <person name="Kondo H."/>
            <person name="Sugawara M."/>
            <person name="Takahashi M."/>
            <person name="Kanda K."/>
            <person name="Yokoi T."/>
            <person name="Furuya T."/>
            <person name="Kikkawa E."/>
            <person name="Omura Y."/>
            <person name="Abe K."/>
            <person name="Kamihara K."/>
            <person name="Katsuta N."/>
            <person name="Sato K."/>
            <person name="Tanikawa M."/>
            <person name="Yamazaki M."/>
            <person name="Ninomiya K."/>
            <person name="Ishibashi T."/>
            <person name="Yamashita H."/>
            <person name="Murakawa K."/>
            <person name="Fujimori K."/>
            <person name="Tanai H."/>
            <person name="Kimata M."/>
            <person name="Watanabe M."/>
            <person name="Hiraoka S."/>
            <person name="Chiba Y."/>
            <person name="Ishida S."/>
            <person name="Ono Y."/>
            <person name="Takiguchi S."/>
            <person name="Watanabe S."/>
            <person name="Yosida M."/>
            <person name="Hotuta T."/>
            <person name="Kusano J."/>
            <person name="Kanehori K."/>
            <person name="Takahashi-Fujii A."/>
            <person name="Hara H."/>
            <person name="Tanase T.-O."/>
            <person name="Nomura Y."/>
            <person name="Togiya S."/>
            <person name="Komai F."/>
            <person name="Hara R."/>
            <person name="Takeuchi K."/>
            <person name="Arita M."/>
            <person name="Imose N."/>
            <person name="Musashino K."/>
            <person name="Yuuki H."/>
            <person name="Oshima A."/>
            <person name="Sasaki N."/>
            <person name="Aotsuka S."/>
            <person name="Yoshikawa Y."/>
            <person name="Matsunawa H."/>
            <person name="Ichihara T."/>
            <person name="Shiohata N."/>
            <person name="Sano S."/>
            <person name="Moriya S."/>
            <person name="Momiyama H."/>
            <person name="Satoh N."/>
            <person name="Takami S."/>
            <person name="Terashima Y."/>
            <person name="Suzuki O."/>
            <person name="Nakagawa S."/>
            <person name="Senoh A."/>
            <person name="Mizoguchi H."/>
            <person name="Goto Y."/>
            <person name="Shimizu F."/>
            <person name="Wakebe H."/>
            <person name="Hishigaki H."/>
            <person name="Watanabe T."/>
            <person name="Sugiyama A."/>
            <person name="Takemoto M."/>
            <person name="Kawakami B."/>
            <person name="Yamazaki M."/>
            <person name="Watanabe K."/>
            <person name="Kumagai A."/>
            <person name="Itakura S."/>
            <person name="Fukuzumi Y."/>
            <person name="Fujimori Y."/>
            <person name="Komiyama M."/>
            <person name="Tashiro H."/>
            <person name="Tanigami A."/>
            <person name="Fujiwara T."/>
            <person name="Ono T."/>
            <person name="Yamada K."/>
            <person name="Fujii Y."/>
            <person name="Ozaki K."/>
            <person name="Hirao M."/>
            <person name="Ohmori Y."/>
            <person name="Kawabata A."/>
            <person name="Hikiji T."/>
            <person name="Kobatake N."/>
            <person name="Inagaki H."/>
            <person name="Ikema Y."/>
            <person name="Okamoto S."/>
            <person name="Okitani R."/>
            <person name="Kawakami T."/>
            <person name="Noguchi S."/>
            <person name="Itoh T."/>
            <person name="Shigeta K."/>
            <person name="Senba T."/>
            <person name="Matsumura K."/>
            <person name="Nakajima Y."/>
            <person name="Mizuno T."/>
            <person name="Morinaga M."/>
            <person name="Sasaki M."/>
            <person name="Togashi T."/>
            <person name="Oyama M."/>
            <person name="Hata H."/>
            <person name="Watanabe M."/>
            <person name="Komatsu T."/>
            <person name="Mizushima-Sugano J."/>
            <person name="Satoh T."/>
            <person name="Shirai Y."/>
            <person name="Takahashi Y."/>
            <person name="Nakagawa K."/>
            <person name="Okumura K."/>
            <person name="Nagase T."/>
            <person name="Nomura N."/>
            <person name="Kikuchi H."/>
            <person name="Masuho Y."/>
            <person name="Yamashita R."/>
            <person name="Nakai K."/>
            <person name="Yada T."/>
            <person name="Nakamura Y."/>
            <person name="Ohara O."/>
            <person name="Isogai T."/>
            <person name="Sugano S."/>
        </authorList>
    </citation>
    <scope>NUCLEOTIDE SEQUENCE [LARGE SCALE MRNA]</scope>
    <source>
        <tissue>Cerebellum</tissue>
    </source>
</reference>
<reference key="3">
    <citation type="submission" date="2005-09" db="EMBL/GenBank/DDBJ databases">
        <authorList>
            <person name="Mural R.J."/>
            <person name="Istrail S."/>
            <person name="Sutton G."/>
            <person name="Florea L."/>
            <person name="Halpern A.L."/>
            <person name="Mobarry C.M."/>
            <person name="Lippert R."/>
            <person name="Walenz B."/>
            <person name="Shatkay H."/>
            <person name="Dew I."/>
            <person name="Miller J.R."/>
            <person name="Flanigan M.J."/>
            <person name="Edwards N.J."/>
            <person name="Bolanos R."/>
            <person name="Fasulo D."/>
            <person name="Halldorsson B.V."/>
            <person name="Hannenhalli S."/>
            <person name="Turner R."/>
            <person name="Yooseph S."/>
            <person name="Lu F."/>
            <person name="Nusskern D.R."/>
            <person name="Shue B.C."/>
            <person name="Zheng X.H."/>
            <person name="Zhong F."/>
            <person name="Delcher A.L."/>
            <person name="Huson D.H."/>
            <person name="Kravitz S.A."/>
            <person name="Mouchard L."/>
            <person name="Reinert K."/>
            <person name="Remington K.A."/>
            <person name="Clark A.G."/>
            <person name="Waterman M.S."/>
            <person name="Eichler E.E."/>
            <person name="Adams M.D."/>
            <person name="Hunkapiller M.W."/>
            <person name="Myers E.W."/>
            <person name="Venter J.C."/>
        </authorList>
    </citation>
    <scope>NUCLEOTIDE SEQUENCE [LARGE SCALE GENOMIC DNA]</scope>
</reference>
<reference key="4">
    <citation type="journal article" date="2004" name="Genome Res.">
        <title>The status, quality, and expansion of the NIH full-length cDNA project: the Mammalian Gene Collection (MGC).</title>
        <authorList>
            <consortium name="The MGC Project Team"/>
        </authorList>
    </citation>
    <scope>NUCLEOTIDE SEQUENCE [LARGE SCALE MRNA]</scope>
    <source>
        <tissue>Brain</tissue>
    </source>
</reference>
<name>HPLN2_HUMAN</name>
<accession>Q9GZV7</accession>
<accession>Q5T3J0</accession>
<organism>
    <name type="scientific">Homo sapiens</name>
    <name type="common">Human</name>
    <dbReference type="NCBI Taxonomy" id="9606"/>
    <lineage>
        <taxon>Eukaryota</taxon>
        <taxon>Metazoa</taxon>
        <taxon>Chordata</taxon>
        <taxon>Craniata</taxon>
        <taxon>Vertebrata</taxon>
        <taxon>Euteleostomi</taxon>
        <taxon>Mammalia</taxon>
        <taxon>Eutheria</taxon>
        <taxon>Euarchontoglires</taxon>
        <taxon>Primates</taxon>
        <taxon>Haplorrhini</taxon>
        <taxon>Catarrhini</taxon>
        <taxon>Hominidae</taxon>
        <taxon>Homo</taxon>
    </lineage>
</organism>
<protein>
    <recommendedName>
        <fullName>Hyaluronan and proteoglycan link protein 2</fullName>
    </recommendedName>
    <alternativeName>
        <fullName>Brain link protein 1</fullName>
    </alternativeName>
</protein>